<protein>
    <recommendedName>
        <fullName evidence="18">Palmitoyltransferase ZDHHC7</fullName>
        <ecNumber evidence="6 8 9 10 11 14">2.3.1.225</ecNumber>
    </recommendedName>
    <alternativeName>
        <fullName evidence="20">Acyltransferase ZDHHC7</fullName>
        <ecNumber evidence="20">2.3.1.-</ecNumber>
    </alternativeName>
    <alternativeName>
        <fullName evidence="21">GABA-A receptor-associated membrane protein 2</fullName>
    </alternativeName>
    <alternativeName>
        <fullName evidence="17">SERZ-beta</fullName>
    </alternativeName>
    <alternativeName>
        <fullName evidence="22">Zinc finger DHHC domain-containing protein 7</fullName>
        <shortName evidence="16">DHHC-7</shortName>
    </alternativeName>
</protein>
<keyword id="KW-0012">Acyltransferase</keyword>
<keyword id="KW-0333">Golgi apparatus</keyword>
<keyword id="KW-0449">Lipoprotein</keyword>
<keyword id="KW-0472">Membrane</keyword>
<keyword id="KW-0564">Palmitate</keyword>
<keyword id="KW-1185">Reference proteome</keyword>
<keyword id="KW-0808">Transferase</keyword>
<keyword id="KW-0812">Transmembrane</keyword>
<keyword id="KW-1133">Transmembrane helix</keyword>
<proteinExistence type="evidence at protein level"/>
<reference key="1">
    <citation type="journal article" date="2004" name="J. Neurosci.">
        <title>The gamma2 subunit of GABA(A) receptors is a substrate for palmitoylation by GODZ.</title>
        <authorList>
            <person name="Keller C.A."/>
            <person name="Yuan X."/>
            <person name="Panzanelli P."/>
            <person name="Martin M.L."/>
            <person name="Alldred M."/>
            <person name="Sassoe-Pognetto M."/>
            <person name="Luescher B."/>
        </authorList>
    </citation>
    <scope>NUCLEOTIDE SEQUENCE [MRNA]</scope>
    <source>
        <strain>FVB/N</strain>
        <tissue>Colon</tissue>
    </source>
</reference>
<reference key="2">
    <citation type="journal article" date="2005" name="Science">
        <title>The transcriptional landscape of the mammalian genome.</title>
        <authorList>
            <person name="Carninci P."/>
            <person name="Kasukawa T."/>
            <person name="Katayama S."/>
            <person name="Gough J."/>
            <person name="Frith M.C."/>
            <person name="Maeda N."/>
            <person name="Oyama R."/>
            <person name="Ravasi T."/>
            <person name="Lenhard B."/>
            <person name="Wells C."/>
            <person name="Kodzius R."/>
            <person name="Shimokawa K."/>
            <person name="Bajic V.B."/>
            <person name="Brenner S.E."/>
            <person name="Batalov S."/>
            <person name="Forrest A.R."/>
            <person name="Zavolan M."/>
            <person name="Davis M.J."/>
            <person name="Wilming L.G."/>
            <person name="Aidinis V."/>
            <person name="Allen J.E."/>
            <person name="Ambesi-Impiombato A."/>
            <person name="Apweiler R."/>
            <person name="Aturaliya R.N."/>
            <person name="Bailey T.L."/>
            <person name="Bansal M."/>
            <person name="Baxter L."/>
            <person name="Beisel K.W."/>
            <person name="Bersano T."/>
            <person name="Bono H."/>
            <person name="Chalk A.M."/>
            <person name="Chiu K.P."/>
            <person name="Choudhary V."/>
            <person name="Christoffels A."/>
            <person name="Clutterbuck D.R."/>
            <person name="Crowe M.L."/>
            <person name="Dalla E."/>
            <person name="Dalrymple B.P."/>
            <person name="de Bono B."/>
            <person name="Della Gatta G."/>
            <person name="di Bernardo D."/>
            <person name="Down T."/>
            <person name="Engstrom P."/>
            <person name="Fagiolini M."/>
            <person name="Faulkner G."/>
            <person name="Fletcher C.F."/>
            <person name="Fukushima T."/>
            <person name="Furuno M."/>
            <person name="Futaki S."/>
            <person name="Gariboldi M."/>
            <person name="Georgii-Hemming P."/>
            <person name="Gingeras T.R."/>
            <person name="Gojobori T."/>
            <person name="Green R.E."/>
            <person name="Gustincich S."/>
            <person name="Harbers M."/>
            <person name="Hayashi Y."/>
            <person name="Hensch T.K."/>
            <person name="Hirokawa N."/>
            <person name="Hill D."/>
            <person name="Huminiecki L."/>
            <person name="Iacono M."/>
            <person name="Ikeo K."/>
            <person name="Iwama A."/>
            <person name="Ishikawa T."/>
            <person name="Jakt M."/>
            <person name="Kanapin A."/>
            <person name="Katoh M."/>
            <person name="Kawasawa Y."/>
            <person name="Kelso J."/>
            <person name="Kitamura H."/>
            <person name="Kitano H."/>
            <person name="Kollias G."/>
            <person name="Krishnan S.P."/>
            <person name="Kruger A."/>
            <person name="Kummerfeld S.K."/>
            <person name="Kurochkin I.V."/>
            <person name="Lareau L.F."/>
            <person name="Lazarevic D."/>
            <person name="Lipovich L."/>
            <person name="Liu J."/>
            <person name="Liuni S."/>
            <person name="McWilliam S."/>
            <person name="Madan Babu M."/>
            <person name="Madera M."/>
            <person name="Marchionni L."/>
            <person name="Matsuda H."/>
            <person name="Matsuzawa S."/>
            <person name="Miki H."/>
            <person name="Mignone F."/>
            <person name="Miyake S."/>
            <person name="Morris K."/>
            <person name="Mottagui-Tabar S."/>
            <person name="Mulder N."/>
            <person name="Nakano N."/>
            <person name="Nakauchi H."/>
            <person name="Ng P."/>
            <person name="Nilsson R."/>
            <person name="Nishiguchi S."/>
            <person name="Nishikawa S."/>
            <person name="Nori F."/>
            <person name="Ohara O."/>
            <person name="Okazaki Y."/>
            <person name="Orlando V."/>
            <person name="Pang K.C."/>
            <person name="Pavan W.J."/>
            <person name="Pavesi G."/>
            <person name="Pesole G."/>
            <person name="Petrovsky N."/>
            <person name="Piazza S."/>
            <person name="Reed J."/>
            <person name="Reid J.F."/>
            <person name="Ring B.Z."/>
            <person name="Ringwald M."/>
            <person name="Rost B."/>
            <person name="Ruan Y."/>
            <person name="Salzberg S.L."/>
            <person name="Sandelin A."/>
            <person name="Schneider C."/>
            <person name="Schoenbach C."/>
            <person name="Sekiguchi K."/>
            <person name="Semple C.A."/>
            <person name="Seno S."/>
            <person name="Sessa L."/>
            <person name="Sheng Y."/>
            <person name="Shibata Y."/>
            <person name="Shimada H."/>
            <person name="Shimada K."/>
            <person name="Silva D."/>
            <person name="Sinclair B."/>
            <person name="Sperling S."/>
            <person name="Stupka E."/>
            <person name="Sugiura K."/>
            <person name="Sultana R."/>
            <person name="Takenaka Y."/>
            <person name="Taki K."/>
            <person name="Tammoja K."/>
            <person name="Tan S.L."/>
            <person name="Tang S."/>
            <person name="Taylor M.S."/>
            <person name="Tegner J."/>
            <person name="Teichmann S.A."/>
            <person name="Ueda H.R."/>
            <person name="van Nimwegen E."/>
            <person name="Verardo R."/>
            <person name="Wei C.L."/>
            <person name="Yagi K."/>
            <person name="Yamanishi H."/>
            <person name="Zabarovsky E."/>
            <person name="Zhu S."/>
            <person name="Zimmer A."/>
            <person name="Hide W."/>
            <person name="Bult C."/>
            <person name="Grimmond S.M."/>
            <person name="Teasdale R.D."/>
            <person name="Liu E.T."/>
            <person name="Brusic V."/>
            <person name="Quackenbush J."/>
            <person name="Wahlestedt C."/>
            <person name="Mattick J.S."/>
            <person name="Hume D.A."/>
            <person name="Kai C."/>
            <person name="Sasaki D."/>
            <person name="Tomaru Y."/>
            <person name="Fukuda S."/>
            <person name="Kanamori-Katayama M."/>
            <person name="Suzuki M."/>
            <person name="Aoki J."/>
            <person name="Arakawa T."/>
            <person name="Iida J."/>
            <person name="Imamura K."/>
            <person name="Itoh M."/>
            <person name="Kato T."/>
            <person name="Kawaji H."/>
            <person name="Kawagashira N."/>
            <person name="Kawashima T."/>
            <person name="Kojima M."/>
            <person name="Kondo S."/>
            <person name="Konno H."/>
            <person name="Nakano K."/>
            <person name="Ninomiya N."/>
            <person name="Nishio T."/>
            <person name="Okada M."/>
            <person name="Plessy C."/>
            <person name="Shibata K."/>
            <person name="Shiraki T."/>
            <person name="Suzuki S."/>
            <person name="Tagami M."/>
            <person name="Waki K."/>
            <person name="Watahiki A."/>
            <person name="Okamura-Oho Y."/>
            <person name="Suzuki H."/>
            <person name="Kawai J."/>
            <person name="Hayashizaki Y."/>
        </authorList>
    </citation>
    <scope>NUCLEOTIDE SEQUENCE [LARGE SCALE MRNA]</scope>
    <source>
        <strain>C57BL/6J</strain>
        <strain>NOD</strain>
        <tissue>Colon</tissue>
        <tissue>Inner ear</tissue>
        <tissue>Spleen</tissue>
        <tissue>Thymus</tissue>
    </source>
</reference>
<reference key="3">
    <citation type="journal article" date="2004" name="Genome Res.">
        <title>The status, quality, and expansion of the NIH full-length cDNA project: the Mammalian Gene Collection (MGC).</title>
        <authorList>
            <consortium name="The MGC Project Team"/>
        </authorList>
    </citation>
    <scope>NUCLEOTIDE SEQUENCE [LARGE SCALE MRNA]</scope>
    <source>
        <strain>C57BL/6J</strain>
        <tissue>Colon</tissue>
        <tissue>Eye</tissue>
        <tissue>Retina</tissue>
    </source>
</reference>
<reference key="4">
    <citation type="journal article" date="2004" name="Neuron">
        <title>Identification of PSD-95 palmitoylating enzymes.</title>
        <authorList>
            <person name="Fukata M."/>
            <person name="Fukata Y."/>
            <person name="Adesnik H."/>
            <person name="Nicoll R.A."/>
            <person name="Bredt D.S."/>
        </authorList>
    </citation>
    <scope>FUNCTION</scope>
    <scope>CATALYTIC ACTIVITY</scope>
    <scope>TISSUE SPECIFICITY</scope>
    <scope>MUTAGENESIS OF 157-ASP-HIS-158</scope>
</reference>
<reference key="5">
    <citation type="journal article" date="2006" name="J. Neurosci.">
        <title>GODZ-mediated palmitoylation of GABA(A) receptors is required for normal assembly and function of GABAergic inhibitory synapses.</title>
        <authorList>
            <person name="Fang C."/>
            <person name="Deng L."/>
            <person name="Keller C.A."/>
            <person name="Fukata M."/>
            <person name="Fukata Y."/>
            <person name="Chen G."/>
            <person name="Luescher B."/>
        </authorList>
    </citation>
    <scope>SUBUNIT</scope>
</reference>
<reference key="6">
    <citation type="journal article" date="2008" name="J. Biol. Chem.">
        <title>Palmitoylation and membrane interactions of the neuroprotective chaperone cysteine-string protein.</title>
        <authorList>
            <person name="Greaves J."/>
            <person name="Salaun C."/>
            <person name="Fukata Y."/>
            <person name="Fukata M."/>
            <person name="Chamberlain L.H."/>
        </authorList>
    </citation>
    <scope>FUNCTION</scope>
    <scope>CATALYTIC ACTIVITY</scope>
    <scope>SUBCELLULAR LOCATION</scope>
    <scope>ACTIVE SITE</scope>
    <scope>MUTAGENESIS OF CYS-160</scope>
</reference>
<reference key="7">
    <citation type="journal article" date="2009" name="Mol. Cell. Biol.">
        <title>Identification of G protein alpha subunit-palmitoylating enzyme.</title>
        <authorList>
            <person name="Tsutsumi R."/>
            <person name="Fukata Y."/>
            <person name="Noritake J."/>
            <person name="Iwanaga T."/>
            <person name="Perez F."/>
            <person name="Fukata M."/>
        </authorList>
    </citation>
    <scope>FUNCTION</scope>
    <scope>CATALYTIC ACTIVITY</scope>
</reference>
<reference key="8">
    <citation type="journal article" date="2013" name="J. Biol. Chem.">
        <title>In silico screening for palmitoyl substrates reveals a role for DHHC1/3/10 (zDHHC1/3/11)-mediated neurochondrin palmitoylation in its targeting to Rab5-positive endosomes.</title>
        <authorList>
            <person name="Oku S."/>
            <person name="Takahashi N."/>
            <person name="Fukata Y."/>
            <person name="Fukata M."/>
        </authorList>
    </citation>
    <scope>FUNCTION</scope>
    <scope>CATALYTIC ACTIVITY</scope>
</reference>
<reference key="9">
    <citation type="journal article" date="2014" name="Mol. Biol. Cell">
        <title>The Golgi S-acylation machinery comprises zDHHC enzymes with major differences in substrate affinity and S-acylation activity.</title>
        <authorList>
            <person name="Lemonidis K."/>
            <person name="Gorleku O.A."/>
            <person name="Sanchez-Perez M.C."/>
            <person name="Grefen C."/>
            <person name="Chamberlain L.H."/>
        </authorList>
    </citation>
    <scope>FUNCTION</scope>
    <scope>CATALYTIC ACTIVITY</scope>
    <scope>AUTOPALMITOYLATION</scope>
</reference>
<reference key="10">
    <citation type="journal article" date="2015" name="Cell Death Differ.">
        <title>Fas palmitoylation by the palmitoyl acyltransferase DHHC7 regulates Fas stability.</title>
        <authorList>
            <person name="Rossin A."/>
            <person name="Durivault J."/>
            <person name="Chakhtoura-Feghali T."/>
            <person name="Lounnas N."/>
            <person name="Gagnoux-Palacios L."/>
            <person name="Hueber A.O."/>
        </authorList>
    </citation>
    <scope>SUBCELLULAR LOCATION</scope>
</reference>
<reference key="11">
    <citation type="journal article" date="2016" name="J. Biol. Chem.">
        <title>Dissociation of Golgi-associated DHHC-type Zinc Finger Protein (GODZ)- and Sertoli Cell Gene with a Zinc Finger Domain-beta (SERZ-beta)-mediated Palmitoylation by Loss of Function Analyses in Knock-out Mice.</title>
        <authorList>
            <person name="Kilpatrick C.L."/>
            <person name="Murakami S."/>
            <person name="Feng M."/>
            <person name="Wu X."/>
            <person name="Lal R."/>
            <person name="Chen G."/>
            <person name="Du K."/>
            <person name="Luscher B."/>
        </authorList>
    </citation>
    <scope>DISRUPTION PHENOTYPE</scope>
</reference>
<reference key="12">
    <citation type="journal article" date="2017" name="J. Biol. Chem.">
        <title>DHHC7 Palmitoylates Glucose Transporter 4 (Glut4) and Regulates Glut4 Membrane Translocation.</title>
        <authorList>
            <person name="Du K."/>
            <person name="Murakami S."/>
            <person name="Sun Y."/>
            <person name="Kilpatrick C.L."/>
            <person name="Luscher B."/>
        </authorList>
    </citation>
    <scope>FUNCTION</scope>
    <scope>CATALYTIC ACTIVITY</scope>
    <scope>PALMITOYLATION</scope>
    <scope>DISRUPTION PHENOTYPE</scope>
</reference>
<reference key="13">
    <citation type="journal article" date="2017" name="Proc. Natl. Acad. Sci. U.S.A.">
        <title>Molecular basis of fatty acid selectivity in the zDHHC family of S-acyltransferases revealed by click chemistry.</title>
        <authorList>
            <person name="Greaves J."/>
            <person name="Munro K.R."/>
            <person name="Davidson S.C."/>
            <person name="Riviere M."/>
            <person name="Wojno J."/>
            <person name="Smith T.K."/>
            <person name="Tomkinson N.C."/>
            <person name="Chamberlain L.H."/>
        </authorList>
    </citation>
    <scope>FUNCTION</scope>
    <scope>CATALYTIC ACTIVITY</scope>
    <scope>SUBSTRATE SPECIFICITY</scope>
</reference>
<reference key="14">
    <citation type="journal article" date="2024" name="Nat. Cell Biol.">
        <title>A palmitoylation-depalmitoylation relay spatiotemporally controls GSDMD activation in pyroptosis.</title>
        <authorList>
            <person name="Zhang N."/>
            <person name="Zhang J."/>
            <person name="Yang Y."/>
            <person name="Shan H."/>
            <person name="Hou S."/>
            <person name="Fang H."/>
            <person name="Ma M."/>
            <person name="Chen Z."/>
            <person name="Tan L."/>
            <person name="Xu D."/>
        </authorList>
    </citation>
    <scope>FUNCTION</scope>
    <scope>CATALYTIC ACTIVITY</scope>
</reference>
<sequence length="308" mass="35213">MQPSGHRLRDIEHHPLLTDNDNYDSASSSSSETDMADRVWFIRDGCGMVCAVMTWLLVVYADFVVTFVMLLPSKDFWYSVVNGVLFNCLAVLALSSHLRTMLTDPGAVPKGNATKEYMESLQLKPGEVIYKCPKCCCIKPERAHHCSICKRCIRKMDHHCPWVNNCVGEKNQRFFVLFTMYIALSSVHALILCGLQFISCVRGQWTECSDFSPPITVILLVFLCLEGLLFFTFTAVMFGTQIHSICNDETEIERLKSEKPTWERRLRWEGMKSVFGGPPSLLWMNPFVGFRLRRLQMRTRKGGPEFSV</sequence>
<accession>Q91WU6</accession>
<accession>Q3TC41</accession>
<accession>Q6EMK2</accession>
<accession>Q8K1H6</accession>
<organism>
    <name type="scientific">Mus musculus</name>
    <name type="common">Mouse</name>
    <dbReference type="NCBI Taxonomy" id="10090"/>
    <lineage>
        <taxon>Eukaryota</taxon>
        <taxon>Metazoa</taxon>
        <taxon>Chordata</taxon>
        <taxon>Craniata</taxon>
        <taxon>Vertebrata</taxon>
        <taxon>Euteleostomi</taxon>
        <taxon>Mammalia</taxon>
        <taxon>Eutheria</taxon>
        <taxon>Euarchontoglires</taxon>
        <taxon>Glires</taxon>
        <taxon>Rodentia</taxon>
        <taxon>Myomorpha</taxon>
        <taxon>Muroidea</taxon>
        <taxon>Muridae</taxon>
        <taxon>Murinae</taxon>
        <taxon>Mus</taxon>
        <taxon>Mus</taxon>
    </lineage>
</organism>
<gene>
    <name evidence="22" type="primary">Zdhhc7</name>
    <name evidence="21" type="synonym">Gramp2</name>
</gene>
<comment type="function">
    <text evidence="2 3 6 8 9 10 11 14 15 20">Golgi-localized palmitoyltransferase that catalyzes the addition of palmitate onto various protein substrates and therefore functions in several unrelated biological processes (PubMed:15603741, PubMed:19001095, PubMed:23687301, PubMed:25253725, PubMed:38538834). Has no stringent fatty acid selectivity and in addition to palmitate can also transfer onto target proteins myristate from tetradecanoyl-CoA and stearate from octadecanoyl-CoA (PubMed:28167757). Palmitoylates sex steroid hormone receptors, including ESR1, PGR and AR, thereby regulating their targeting to the plasma membrane and their function in rapid intracellular signaling upon binding of sex hormones. Palmitoylates GNAQ, a heterotrimeric G protein, regulating its dynamic localization at the plasma membrane and is thereby involved in GNAQ-dependent G protein-coupled receptor signaling pathways (PubMed:19001095). Also functions in ligand-induced cell death by regulating the FAS signaling pathway through the palmitoylation and stabilization of the receptor at the plasma membrane. In epithelial cells, palmitoylates SCRIB and regulates its localization to the plasma membrane, regulating indirectly cell polarity and differentiation. Also palmitoylates JAM3 and promotes its expression at tight junctions and regulates its function in cell migration (By similarity). Palmitoylates the glucose transporter GLUT4/SLC2A4 and controls the insulin-dependent translocation of GLUT4 to the plasma membrane (PubMed:28057756). In brain, could also palmitoylate SNAP25 and DLG4/PSD95 (PubMed:15603741, PubMed:25253725). Could also palmitoylate DNAJC5 and regulate its localization to the Golgi membrane (PubMed:18596047). Could also palmitoylate NCDN (PubMed:23687301). May play a role in follicle stimulation hormone (FSH) activation of testicular Sertoli cells (By similarity). Activates pyroptosis by catalyzing palmitoylation of gasdermin-D (GSDMD) (PubMed:38538834).</text>
</comment>
<comment type="catalytic activity">
    <reaction evidence="6 8 9 10 11 14 15">
        <text>L-cysteinyl-[protein] + hexadecanoyl-CoA = S-hexadecanoyl-L-cysteinyl-[protein] + CoA</text>
        <dbReference type="Rhea" id="RHEA:36683"/>
        <dbReference type="Rhea" id="RHEA-COMP:10131"/>
        <dbReference type="Rhea" id="RHEA-COMP:11032"/>
        <dbReference type="ChEBI" id="CHEBI:29950"/>
        <dbReference type="ChEBI" id="CHEBI:57287"/>
        <dbReference type="ChEBI" id="CHEBI:57379"/>
        <dbReference type="ChEBI" id="CHEBI:74151"/>
        <dbReference type="EC" id="2.3.1.225"/>
    </reaction>
    <physiologicalReaction direction="left-to-right" evidence="14">
        <dbReference type="Rhea" id="RHEA:36684"/>
    </physiologicalReaction>
</comment>
<comment type="catalytic activity">
    <reaction evidence="20">
        <text>L-cysteinyl-[protein] + tetradecanoyl-CoA = S-tetradecanoyl-L-cysteinyl-[protein] + CoA</text>
        <dbReference type="Rhea" id="RHEA:59736"/>
        <dbReference type="Rhea" id="RHEA-COMP:10131"/>
        <dbReference type="Rhea" id="RHEA-COMP:15433"/>
        <dbReference type="ChEBI" id="CHEBI:29950"/>
        <dbReference type="ChEBI" id="CHEBI:57287"/>
        <dbReference type="ChEBI" id="CHEBI:57385"/>
        <dbReference type="ChEBI" id="CHEBI:143199"/>
    </reaction>
    <physiologicalReaction direction="left-to-right" evidence="20">
        <dbReference type="Rhea" id="RHEA:59737"/>
    </physiologicalReaction>
</comment>
<comment type="catalytic activity">
    <reaction evidence="20">
        <text>L-cysteinyl-[protein] + octadecanoyl-CoA = S-octadecanoyl-L-cysteinyl-[protein] + CoA</text>
        <dbReference type="Rhea" id="RHEA:59740"/>
        <dbReference type="Rhea" id="RHEA-COMP:10131"/>
        <dbReference type="Rhea" id="RHEA-COMP:15434"/>
        <dbReference type="ChEBI" id="CHEBI:29950"/>
        <dbReference type="ChEBI" id="CHEBI:57287"/>
        <dbReference type="ChEBI" id="CHEBI:57394"/>
        <dbReference type="ChEBI" id="CHEBI:143200"/>
    </reaction>
    <physiologicalReaction direction="left-to-right" evidence="20">
        <dbReference type="Rhea" id="RHEA:59741"/>
    </physiologicalReaction>
</comment>
<comment type="subunit">
    <text evidence="7">Homooligomers (PubMed:17151279). Heterooligomers with ZDHHC3 (PubMed:17151279).</text>
</comment>
<comment type="subcellular location">
    <subcellularLocation>
        <location evidence="8 12">Golgi apparatus membrane</location>
        <topology evidence="4">Multi-pass membrane protein</topology>
    </subcellularLocation>
</comment>
<comment type="tissue specificity">
    <text evidence="6">Ubiquitously expressed, with highest levels in liver, kidney and brain. Expressed in all brain regions.</text>
</comment>
<comment type="domain">
    <text evidence="1">The DHHC domain is required for palmitoyltransferase activity.</text>
</comment>
<comment type="PTM">
    <text evidence="11 14">Autopalmitoylated.</text>
</comment>
<comment type="disruption phenotype">
    <text evidence="13 14">Homozygous knockout mice are viable, fertile and do not display overt phenotype (PubMed:27875292). Knockout mice are hyperglycemic, glucose intolerant and develop a type II diabetic syndrome (PubMed:28057756). Zdhhc3 and Zdhhc7 double knockout mice show a perinatally lethal phenotype (PubMed:27875292).</text>
</comment>
<comment type="similarity">
    <text evidence="18">Belongs to the DHHC palmitoyltransferase family.</text>
</comment>
<evidence type="ECO:0000250" key="1">
    <source>
        <dbReference type="UniProtKB" id="Q8IUH5"/>
    </source>
</evidence>
<evidence type="ECO:0000250" key="2">
    <source>
        <dbReference type="UniProtKB" id="Q923G5"/>
    </source>
</evidence>
<evidence type="ECO:0000250" key="3">
    <source>
        <dbReference type="UniProtKB" id="Q9NXF8"/>
    </source>
</evidence>
<evidence type="ECO:0000255" key="4"/>
<evidence type="ECO:0000255" key="5">
    <source>
        <dbReference type="PROSITE-ProRule" id="PRU00067"/>
    </source>
</evidence>
<evidence type="ECO:0000269" key="6">
    <source>
    </source>
</evidence>
<evidence type="ECO:0000269" key="7">
    <source>
    </source>
</evidence>
<evidence type="ECO:0000269" key="8">
    <source>
    </source>
</evidence>
<evidence type="ECO:0000269" key="9">
    <source>
    </source>
</evidence>
<evidence type="ECO:0000269" key="10">
    <source>
    </source>
</evidence>
<evidence type="ECO:0000269" key="11">
    <source>
    </source>
</evidence>
<evidence type="ECO:0000269" key="12">
    <source>
    </source>
</evidence>
<evidence type="ECO:0000269" key="13">
    <source>
    </source>
</evidence>
<evidence type="ECO:0000269" key="14">
    <source>
    </source>
</evidence>
<evidence type="ECO:0000269" key="15">
    <source>
    </source>
</evidence>
<evidence type="ECO:0000303" key="16">
    <source>
    </source>
</evidence>
<evidence type="ECO:0000303" key="17">
    <source>
    </source>
</evidence>
<evidence type="ECO:0000305" key="18"/>
<evidence type="ECO:0000305" key="19">
    <source>
    </source>
</evidence>
<evidence type="ECO:0000305" key="20">
    <source>
    </source>
</evidence>
<evidence type="ECO:0000312" key="21">
    <source>
        <dbReference type="EMBL" id="AAO27360.1"/>
    </source>
</evidence>
<evidence type="ECO:0000312" key="22">
    <source>
        <dbReference type="MGI" id="MGI:2142662"/>
    </source>
</evidence>
<feature type="chain" id="PRO_0000212875" description="Palmitoyltransferase ZDHHC7">
    <location>
        <begin position="1"/>
        <end position="308"/>
    </location>
</feature>
<feature type="topological domain" description="Cytoplasmic" evidence="18">
    <location>
        <begin position="1"/>
        <end position="50"/>
    </location>
</feature>
<feature type="transmembrane region" description="Helical" evidence="4">
    <location>
        <begin position="51"/>
        <end position="71"/>
    </location>
</feature>
<feature type="topological domain" description="Lumenal" evidence="18">
    <location>
        <begin position="72"/>
        <end position="75"/>
    </location>
</feature>
<feature type="transmembrane region" description="Helical" evidence="4">
    <location>
        <begin position="76"/>
        <end position="96"/>
    </location>
</feature>
<feature type="topological domain" description="Cytoplasmic" evidence="18">
    <location>
        <begin position="97"/>
        <end position="173"/>
    </location>
</feature>
<feature type="transmembrane region" description="Helical" evidence="4">
    <location>
        <begin position="174"/>
        <end position="194"/>
    </location>
</feature>
<feature type="topological domain" description="Lumenal" evidence="18">
    <location>
        <begin position="195"/>
        <end position="217"/>
    </location>
</feature>
<feature type="transmembrane region" description="Helical" evidence="4">
    <location>
        <begin position="218"/>
        <end position="238"/>
    </location>
</feature>
<feature type="topological domain" description="Cytoplasmic" evidence="18">
    <location>
        <begin position="239"/>
        <end position="308"/>
    </location>
</feature>
<feature type="domain" description="DHHC" evidence="5">
    <location>
        <begin position="130"/>
        <end position="180"/>
    </location>
</feature>
<feature type="active site" description="S-palmitoyl cysteine intermediate" evidence="5 19">
    <location>
        <position position="160"/>
    </location>
</feature>
<feature type="mutagenesis site" description="Fails to enhance DLG4 palmitoylation." evidence="6">
    <original>DH</original>
    <variation>AA</variation>
    <location>
        <begin position="157"/>
        <end position="158"/>
    </location>
</feature>
<feature type="mutagenesis site" description="Loss of protein-cysteine S-palmitoyltransferase activity." evidence="19">
    <original>C</original>
    <variation>S</variation>
    <location>
        <position position="160"/>
    </location>
</feature>
<feature type="sequence conflict" description="In Ref. 2; BAE42116." evidence="18" ref="2">
    <original>L</original>
    <variation>F</variation>
    <location>
        <position position="56"/>
    </location>
</feature>
<name>ZDHC7_MOUSE</name>
<dbReference type="EC" id="2.3.1.225" evidence="6 8 9 10 11 14"/>
<dbReference type="EC" id="2.3.1.-" evidence="20"/>
<dbReference type="EMBL" id="AY166673">
    <property type="protein sequence ID" value="AAO27360.1"/>
    <property type="molecule type" value="mRNA"/>
</dbReference>
<dbReference type="EMBL" id="AK041905">
    <property type="protein sequence ID" value="BAC31093.1"/>
    <property type="molecule type" value="mRNA"/>
</dbReference>
<dbReference type="EMBL" id="AK157968">
    <property type="protein sequence ID" value="BAE34289.1"/>
    <property type="molecule type" value="mRNA"/>
</dbReference>
<dbReference type="EMBL" id="AK170639">
    <property type="protein sequence ID" value="BAE41929.1"/>
    <property type="molecule type" value="mRNA"/>
</dbReference>
<dbReference type="EMBL" id="AK170923">
    <property type="protein sequence ID" value="BAE42116.1"/>
    <property type="molecule type" value="mRNA"/>
</dbReference>
<dbReference type="EMBL" id="AK172462">
    <property type="protein sequence ID" value="BAE43018.1"/>
    <property type="molecule type" value="mRNA"/>
</dbReference>
<dbReference type="EMBL" id="BC013467">
    <property type="protein sequence ID" value="AAH13467.1"/>
    <property type="molecule type" value="mRNA"/>
</dbReference>
<dbReference type="EMBL" id="BC029666">
    <property type="protein sequence ID" value="AAH29666.1"/>
    <property type="molecule type" value="mRNA"/>
</dbReference>
<dbReference type="EMBL" id="BC075666">
    <property type="protein sequence ID" value="AAH75666.1"/>
    <property type="molecule type" value="mRNA"/>
</dbReference>
<dbReference type="CCDS" id="CCDS22715.1"/>
<dbReference type="RefSeq" id="NP_598728.1">
    <property type="nucleotide sequence ID" value="NM_133967.3"/>
</dbReference>
<dbReference type="RefSeq" id="XP_011246559.1">
    <property type="nucleotide sequence ID" value="XM_011248257.4"/>
</dbReference>
<dbReference type="SMR" id="Q91WU6"/>
<dbReference type="BioGRID" id="221814">
    <property type="interactions" value="1"/>
</dbReference>
<dbReference type="FunCoup" id="Q91WU6">
    <property type="interactions" value="3407"/>
</dbReference>
<dbReference type="STRING" id="10090.ENSMUSP00000034280"/>
<dbReference type="iPTMnet" id="Q91WU6"/>
<dbReference type="PhosphoSitePlus" id="Q91WU6"/>
<dbReference type="SwissPalm" id="Q91WU6"/>
<dbReference type="PaxDb" id="10090-ENSMUSP00000034280"/>
<dbReference type="ProteomicsDB" id="275142"/>
<dbReference type="Antibodypedia" id="30621">
    <property type="antibodies" value="141 antibodies from 26 providers"/>
</dbReference>
<dbReference type="DNASU" id="102193"/>
<dbReference type="Ensembl" id="ENSMUST00000034280.9">
    <property type="protein sequence ID" value="ENSMUSP00000034280.8"/>
    <property type="gene ID" value="ENSMUSG00000031823.15"/>
</dbReference>
<dbReference type="GeneID" id="102193"/>
<dbReference type="KEGG" id="mmu:102193"/>
<dbReference type="UCSC" id="uc009nqr.1">
    <property type="organism name" value="mouse"/>
</dbReference>
<dbReference type="AGR" id="MGI:2142662"/>
<dbReference type="CTD" id="55625"/>
<dbReference type="MGI" id="MGI:2142662">
    <property type="gene designation" value="Zdhhc7"/>
</dbReference>
<dbReference type="VEuPathDB" id="HostDB:ENSMUSG00000031823"/>
<dbReference type="eggNOG" id="KOG1311">
    <property type="taxonomic scope" value="Eukaryota"/>
</dbReference>
<dbReference type="GeneTree" id="ENSGT00940000156519"/>
<dbReference type="HOGENOM" id="CLU_048061_1_1_1"/>
<dbReference type="InParanoid" id="Q91WU6"/>
<dbReference type="OMA" id="WYSMING"/>
<dbReference type="OrthoDB" id="331948at2759"/>
<dbReference type="PhylomeDB" id="Q91WU6"/>
<dbReference type="TreeFam" id="TF319798"/>
<dbReference type="Reactome" id="R-MMU-9009391">
    <property type="pathway name" value="Extra-nuclear estrogen signaling"/>
</dbReference>
<dbReference type="BioGRID-ORCS" id="102193">
    <property type="hits" value="1 hit in 79 CRISPR screens"/>
</dbReference>
<dbReference type="PRO" id="PR:Q91WU6"/>
<dbReference type="Proteomes" id="UP000000589">
    <property type="component" value="Chromosome 8"/>
</dbReference>
<dbReference type="RNAct" id="Q91WU6">
    <property type="molecule type" value="protein"/>
</dbReference>
<dbReference type="Bgee" id="ENSMUSG00000031823">
    <property type="expression patterns" value="Expressed in interventricular septum and 251 other cell types or tissues"/>
</dbReference>
<dbReference type="GO" id="GO:0005794">
    <property type="term" value="C:Golgi apparatus"/>
    <property type="evidence" value="ECO:0000314"/>
    <property type="project" value="UniProtKB"/>
</dbReference>
<dbReference type="GO" id="GO:0000139">
    <property type="term" value="C:Golgi membrane"/>
    <property type="evidence" value="ECO:0007669"/>
    <property type="project" value="UniProtKB-SubCell"/>
</dbReference>
<dbReference type="GO" id="GO:0005654">
    <property type="term" value="C:nucleoplasm"/>
    <property type="evidence" value="ECO:0007669"/>
    <property type="project" value="Ensembl"/>
</dbReference>
<dbReference type="GO" id="GO:0016409">
    <property type="term" value="F:palmitoyltransferase activity"/>
    <property type="evidence" value="ECO:0000314"/>
    <property type="project" value="MGI"/>
</dbReference>
<dbReference type="GO" id="GO:0019705">
    <property type="term" value="F:protein-cysteine S-myristoyltransferase activity"/>
    <property type="evidence" value="ECO:0000305"/>
    <property type="project" value="UniProtKB"/>
</dbReference>
<dbReference type="GO" id="GO:0019706">
    <property type="term" value="F:protein-cysteine S-palmitoyltransferase activity"/>
    <property type="evidence" value="ECO:0000314"/>
    <property type="project" value="UniProtKB"/>
</dbReference>
<dbReference type="GO" id="GO:0140439">
    <property type="term" value="F:protein-cysteine S-stearoyltransferase activity"/>
    <property type="evidence" value="ECO:0000305"/>
    <property type="project" value="UniProtKB"/>
</dbReference>
<dbReference type="GO" id="GO:0030521">
    <property type="term" value="P:androgen receptor signaling pathway"/>
    <property type="evidence" value="ECO:0007669"/>
    <property type="project" value="Ensembl"/>
</dbReference>
<dbReference type="GO" id="GO:0044381">
    <property type="term" value="P:glucose import in response to insulin stimulus"/>
    <property type="evidence" value="ECO:0000315"/>
    <property type="project" value="UniProtKB"/>
</dbReference>
<dbReference type="GO" id="GO:0009895">
    <property type="term" value="P:negative regulation of catabolic process"/>
    <property type="evidence" value="ECO:0000250"/>
    <property type="project" value="UniProtKB"/>
</dbReference>
<dbReference type="GO" id="GO:0018230">
    <property type="term" value="P:peptidyl-L-cysteine S-palmitoylation"/>
    <property type="evidence" value="ECO:0000314"/>
    <property type="project" value="UniProtKB"/>
</dbReference>
<dbReference type="GO" id="GO:0030859">
    <property type="term" value="P:polarized epithelial cell differentiation"/>
    <property type="evidence" value="ECO:0000250"/>
    <property type="project" value="UniProtKB"/>
</dbReference>
<dbReference type="GO" id="GO:0010828">
    <property type="term" value="P:positive regulation of D-glucose transmembrane transport"/>
    <property type="evidence" value="ECO:0007669"/>
    <property type="project" value="Ensembl"/>
</dbReference>
<dbReference type="GO" id="GO:0050847">
    <property type="term" value="P:progesterone receptor signaling pathway"/>
    <property type="evidence" value="ECO:0007669"/>
    <property type="project" value="Ensembl"/>
</dbReference>
<dbReference type="GO" id="GO:0072659">
    <property type="term" value="P:protein localization to plasma membrane"/>
    <property type="evidence" value="ECO:0007669"/>
    <property type="project" value="Ensembl"/>
</dbReference>
<dbReference type="GO" id="GO:0018345">
    <property type="term" value="P:protein palmitoylation"/>
    <property type="evidence" value="ECO:0000314"/>
    <property type="project" value="UniProtKB"/>
</dbReference>
<dbReference type="GO" id="GO:1902044">
    <property type="term" value="P:regulation of Fas signaling pathway"/>
    <property type="evidence" value="ECO:0000250"/>
    <property type="project" value="UniProtKB"/>
</dbReference>
<dbReference type="GO" id="GO:0008277">
    <property type="term" value="P:regulation of G protein-coupled receptor signaling pathway"/>
    <property type="evidence" value="ECO:0000250"/>
    <property type="project" value="UniProtKB"/>
</dbReference>
<dbReference type="GO" id="GO:0150106">
    <property type="term" value="P:regulation of protein localization to cell-cell junction"/>
    <property type="evidence" value="ECO:0000250"/>
    <property type="project" value="UniProtKB"/>
</dbReference>
<dbReference type="GO" id="GO:1903076">
    <property type="term" value="P:regulation of protein localization to plasma membrane"/>
    <property type="evidence" value="ECO:0000315"/>
    <property type="project" value="UniProtKB"/>
</dbReference>
<dbReference type="InterPro" id="IPR001594">
    <property type="entry name" value="Palmitoyltrfase_DHHC"/>
</dbReference>
<dbReference type="InterPro" id="IPR039859">
    <property type="entry name" value="PFA4/ZDH16/20/ERF2-like"/>
</dbReference>
<dbReference type="PANTHER" id="PTHR12246">
    <property type="entry name" value="PALMITOYLTRANSFERASE ZDHHC16"/>
    <property type="match status" value="1"/>
</dbReference>
<dbReference type="Pfam" id="PF01529">
    <property type="entry name" value="DHHC"/>
    <property type="match status" value="1"/>
</dbReference>
<dbReference type="PROSITE" id="PS50216">
    <property type="entry name" value="DHHC"/>
    <property type="match status" value="1"/>
</dbReference>